<comment type="subunit">
    <text evidence="1">Homodimer and heterodimers.</text>
</comment>
<comment type="subcellular location">
    <subcellularLocation>
        <location evidence="1">Cell membrane</location>
        <topology evidence="1">Multi-pass membrane protein</topology>
    </subcellularLocation>
</comment>
<comment type="similarity">
    <text evidence="3">Belongs to the Casparian strip membrane proteins (CASP) family.</text>
</comment>
<organism>
    <name type="scientific">Picea sitchensis</name>
    <name type="common">Sitka spruce</name>
    <name type="synonym">Pinus sitchensis</name>
    <dbReference type="NCBI Taxonomy" id="3332"/>
    <lineage>
        <taxon>Eukaryota</taxon>
        <taxon>Viridiplantae</taxon>
        <taxon>Streptophyta</taxon>
        <taxon>Embryophyta</taxon>
        <taxon>Tracheophyta</taxon>
        <taxon>Spermatophyta</taxon>
        <taxon>Pinopsida</taxon>
        <taxon>Pinidae</taxon>
        <taxon>Conifers I</taxon>
        <taxon>Pinales</taxon>
        <taxon>Pinaceae</taxon>
        <taxon>Picea</taxon>
    </lineage>
</organism>
<name>CSPL6_PICSI</name>
<reference key="1">
    <citation type="submission" date="2006-10" db="EMBL/GenBank/DDBJ databases">
        <title>The spruce transcriptome: analysis of ca. 6,500 sequence-verified full-length cDNAs.</title>
        <authorList>
            <person name="Ralph S.G."/>
            <person name="Kirkpatrick R."/>
            <person name="Chun H.J.E."/>
            <person name="Palmquist D."/>
            <person name="Wynhoven B."/>
            <person name="Kolosova N."/>
            <person name="Cooper N."/>
            <person name="Oddy C."/>
            <person name="Jancsik S."/>
            <person name="Ritland C.E."/>
            <person name="Douglas C.J."/>
            <person name="Butterfield Y.S.N."/>
            <person name="Liu J."/>
            <person name="Stott J."/>
            <person name="Yang G."/>
            <person name="Barber S."/>
            <person name="Holt R.A."/>
            <person name="Siddiqui A."/>
            <person name="Jones S.J.M."/>
            <person name="Marra M.A."/>
            <person name="Ritland K."/>
            <person name="Bohlmann J."/>
        </authorList>
    </citation>
    <scope>NUCLEOTIDE SEQUENCE [LARGE SCALE MRNA]</scope>
    <source>
        <strain>cv. FB3-425</strain>
    </source>
</reference>
<reference key="2">
    <citation type="journal article" date="2014" name="Plant Physiol.">
        <title>Functional and evolutionary analysis of the CASPARIAN STRIP MEMBRANE DOMAIN PROTEIN family.</title>
        <authorList>
            <person name="Roppolo D."/>
            <person name="Boeckmann B."/>
            <person name="Pfister A."/>
            <person name="Boutet E."/>
            <person name="Rubio M.C."/>
            <person name="Denervaud-Tendon V."/>
            <person name="Vermeer J.E."/>
            <person name="Gheyselinck J."/>
            <person name="Xenarios I."/>
            <person name="Geldner N."/>
        </authorList>
    </citation>
    <scope>GENE FAMILY</scope>
    <scope>NOMENCLATURE</scope>
</reference>
<protein>
    <recommendedName>
        <fullName>CASP-like protein 2A2</fullName>
        <shortName>PsCASPL2A2</shortName>
    </recommendedName>
</protein>
<feature type="chain" id="PRO_0000370319" description="CASP-like protein 2A2">
    <location>
        <begin position="1"/>
        <end position="196"/>
    </location>
</feature>
<feature type="topological domain" description="Cytoplasmic" evidence="2">
    <location>
        <begin position="1"/>
        <end position="26"/>
    </location>
</feature>
<feature type="transmembrane region" description="Helical" evidence="2">
    <location>
        <begin position="27"/>
        <end position="47"/>
    </location>
</feature>
<feature type="topological domain" description="Extracellular" evidence="2">
    <location>
        <begin position="48"/>
        <end position="68"/>
    </location>
</feature>
<feature type="transmembrane region" description="Helical" evidence="2">
    <location>
        <begin position="69"/>
        <end position="89"/>
    </location>
</feature>
<feature type="topological domain" description="Cytoplasmic" evidence="2">
    <location>
        <begin position="90"/>
        <end position="98"/>
    </location>
</feature>
<feature type="transmembrane region" description="Helical" evidence="2">
    <location>
        <begin position="99"/>
        <end position="119"/>
    </location>
</feature>
<feature type="topological domain" description="Extracellular" evidence="2">
    <location>
        <begin position="120"/>
        <end position="148"/>
    </location>
</feature>
<feature type="transmembrane region" description="Helical" evidence="2">
    <location>
        <begin position="149"/>
        <end position="169"/>
    </location>
</feature>
<feature type="topological domain" description="Cytoplasmic" evidence="2">
    <location>
        <begin position="170"/>
        <end position="196"/>
    </location>
</feature>
<sequence length="196" mass="21493">MAQGKESVSVVEMEGSGNGPAVEMRHFETLFRLLPVGLCISALVLMLKSEQSDQYMQLDYSNVDAFRCLAYANGICAGYSLISAFDSMVPVSHHISRSWILFLLDQGITYLMLAGGAVATQVLYVAYKGDEKATWEQICGSYGRFCNRAGASVIISFFALVCFLLLSLLSAYRLFSKYDPPIHGGAKLEDQTTAQI</sequence>
<dbReference type="EMBL" id="EF087625">
    <property type="protein sequence ID" value="ABK26862.1"/>
    <property type="molecule type" value="mRNA"/>
</dbReference>
<dbReference type="SMR" id="A9P1V1"/>
<dbReference type="OMA" id="TWSSACE"/>
<dbReference type="GO" id="GO:0005886">
    <property type="term" value="C:plasma membrane"/>
    <property type="evidence" value="ECO:0007669"/>
    <property type="project" value="UniProtKB-SubCell"/>
</dbReference>
<dbReference type="InterPro" id="IPR006459">
    <property type="entry name" value="CASP/CASPL"/>
</dbReference>
<dbReference type="InterPro" id="IPR006702">
    <property type="entry name" value="CASP_dom"/>
</dbReference>
<dbReference type="NCBIfam" id="TIGR01569">
    <property type="entry name" value="A_tha_TIGR01569"/>
    <property type="match status" value="1"/>
</dbReference>
<dbReference type="PANTHER" id="PTHR33573:SF46">
    <property type="entry name" value="CASP-LIKE PROTEIN 2A1"/>
    <property type="match status" value="1"/>
</dbReference>
<dbReference type="PANTHER" id="PTHR33573">
    <property type="entry name" value="CASP-LIKE PROTEIN 4A4"/>
    <property type="match status" value="1"/>
</dbReference>
<dbReference type="Pfam" id="PF04535">
    <property type="entry name" value="CASP_dom"/>
    <property type="match status" value="1"/>
</dbReference>
<keyword id="KW-1003">Cell membrane</keyword>
<keyword id="KW-0472">Membrane</keyword>
<keyword id="KW-0812">Transmembrane</keyword>
<keyword id="KW-1133">Transmembrane helix</keyword>
<evidence type="ECO:0000250" key="1"/>
<evidence type="ECO:0000255" key="2"/>
<evidence type="ECO:0000305" key="3"/>
<accession>A9P1V1</accession>
<proteinExistence type="evidence at transcript level"/>